<evidence type="ECO:0000255" key="1"/>
<evidence type="ECO:0000305" key="2"/>
<accession>Q7YQL0</accession>
<proteinExistence type="evidence at transcript level"/>
<protein>
    <recommendedName>
        <fullName>Tetraspanin-7</fullName>
        <shortName>Tspan-7</shortName>
    </recommendedName>
    <alternativeName>
        <fullName>Transmembrane 4 superfamily member 2</fullName>
    </alternativeName>
    <cdAntigenName>CD231</cdAntigenName>
</protein>
<comment type="function">
    <text>May be involved in cell proliferation and cell motility.</text>
</comment>
<comment type="subcellular location">
    <subcellularLocation>
        <location>Membrane</location>
        <topology>Multi-pass membrane protein</topology>
    </subcellularLocation>
</comment>
<comment type="similarity">
    <text evidence="2">Belongs to the tetraspanin (TM4SF) family.</text>
</comment>
<keyword id="KW-0325">Glycoprotein</keyword>
<keyword id="KW-0472">Membrane</keyword>
<keyword id="KW-1185">Reference proteome</keyword>
<keyword id="KW-0812">Transmembrane</keyword>
<keyword id="KW-1133">Transmembrane helix</keyword>
<name>TSN7_PANTR</name>
<dbReference type="EMBL" id="AB102666">
    <property type="protein sequence ID" value="BAC81135.1"/>
    <property type="molecule type" value="mRNA"/>
</dbReference>
<dbReference type="RefSeq" id="NP_001009070.1">
    <property type="nucleotide sequence ID" value="NM_001009070.1"/>
</dbReference>
<dbReference type="SMR" id="Q7YQL0"/>
<dbReference type="FunCoup" id="Q7YQL0">
    <property type="interactions" value="464"/>
</dbReference>
<dbReference type="STRING" id="9598.ENSPTRP00000037400"/>
<dbReference type="GlyCosmos" id="Q7YQL0">
    <property type="glycosylation" value="5 sites, No reported glycans"/>
</dbReference>
<dbReference type="PaxDb" id="9598-ENSPTRP00000037400"/>
<dbReference type="GeneID" id="450182"/>
<dbReference type="KEGG" id="ptr:450182"/>
<dbReference type="CTD" id="7102"/>
<dbReference type="eggNOG" id="KOG3882">
    <property type="taxonomic scope" value="Eukaryota"/>
</dbReference>
<dbReference type="HOGENOM" id="CLU_055524_3_0_1"/>
<dbReference type="InParanoid" id="Q7YQL0"/>
<dbReference type="TreeFam" id="TF352891"/>
<dbReference type="Proteomes" id="UP000002277">
    <property type="component" value="Unplaced"/>
</dbReference>
<dbReference type="GO" id="GO:0005886">
    <property type="term" value="C:plasma membrane"/>
    <property type="evidence" value="ECO:0000318"/>
    <property type="project" value="GO_Central"/>
</dbReference>
<dbReference type="CDD" id="cd03161">
    <property type="entry name" value="TM4SF2_6_like_LEL"/>
    <property type="match status" value="1"/>
</dbReference>
<dbReference type="FunFam" id="1.10.1450.10:FF:000003">
    <property type="entry name" value="Tetraspanin"/>
    <property type="match status" value="1"/>
</dbReference>
<dbReference type="Gene3D" id="1.10.1450.10">
    <property type="entry name" value="Tetraspanin"/>
    <property type="match status" value="1"/>
</dbReference>
<dbReference type="InterPro" id="IPR018499">
    <property type="entry name" value="Tetraspanin/Peripherin"/>
</dbReference>
<dbReference type="InterPro" id="IPR000301">
    <property type="entry name" value="Tetraspanin_animals"/>
</dbReference>
<dbReference type="InterPro" id="IPR018503">
    <property type="entry name" value="Tetraspanin_CS"/>
</dbReference>
<dbReference type="InterPro" id="IPR008952">
    <property type="entry name" value="Tetraspanin_EC2_sf"/>
</dbReference>
<dbReference type="InterPro" id="IPR048232">
    <property type="entry name" value="TSN6/7_LEL"/>
</dbReference>
<dbReference type="PANTHER" id="PTHR19282">
    <property type="entry name" value="TETRASPANIN"/>
    <property type="match status" value="1"/>
</dbReference>
<dbReference type="PANTHER" id="PTHR19282:SF257">
    <property type="entry name" value="TETRASPANIN-7"/>
    <property type="match status" value="1"/>
</dbReference>
<dbReference type="Pfam" id="PF00335">
    <property type="entry name" value="Tetraspanin"/>
    <property type="match status" value="1"/>
</dbReference>
<dbReference type="PIRSF" id="PIRSF002419">
    <property type="entry name" value="Tetraspanin"/>
    <property type="match status" value="1"/>
</dbReference>
<dbReference type="PRINTS" id="PR00259">
    <property type="entry name" value="TMFOUR"/>
</dbReference>
<dbReference type="SUPFAM" id="SSF48652">
    <property type="entry name" value="Tetraspanin"/>
    <property type="match status" value="1"/>
</dbReference>
<dbReference type="PROSITE" id="PS00421">
    <property type="entry name" value="TM4_1"/>
    <property type="match status" value="1"/>
</dbReference>
<reference key="1">
    <citation type="journal article" date="2003" name="Mol. Biol. Evol.">
        <title>Gene diversity patterns at 10 X-chromosomal loci in humans and chimpanzees.</title>
        <authorList>
            <person name="Kitano T."/>
            <person name="Schwarz C."/>
            <person name="Nickel B."/>
            <person name="Paeaebo S."/>
        </authorList>
    </citation>
    <scope>NUCLEOTIDE SEQUENCE [MRNA]</scope>
</reference>
<gene>
    <name type="primary">TSPAN7</name>
    <name type="synonym">TM4SF2</name>
</gene>
<sequence length="244" mass="26972">METKPVITCLKTLLIIYSFVFWITGVILLAVGVWGKLTLGTYISLIAENSTNAPYVLIGTGTTIVVFGLFGCFATCRGSPWMLKLYAMFLSLVFLAELVAGISGFVFRHEIKDTFLRTYTDAMQTYNGNDERSRAVDHVQRSLSCCGVQNYTNWSTSPYFLEHGIPPSCCMNETDCNPQDLHNLTVAATKVNQKGCYDLVTSFMETNMGIIAGVAFGIAFSQLIGMLLACCLSRFITANQYEMV</sequence>
<organism>
    <name type="scientific">Pan troglodytes</name>
    <name type="common">Chimpanzee</name>
    <dbReference type="NCBI Taxonomy" id="9598"/>
    <lineage>
        <taxon>Eukaryota</taxon>
        <taxon>Metazoa</taxon>
        <taxon>Chordata</taxon>
        <taxon>Craniata</taxon>
        <taxon>Vertebrata</taxon>
        <taxon>Euteleostomi</taxon>
        <taxon>Mammalia</taxon>
        <taxon>Eutheria</taxon>
        <taxon>Euarchontoglires</taxon>
        <taxon>Primates</taxon>
        <taxon>Haplorrhini</taxon>
        <taxon>Catarrhini</taxon>
        <taxon>Hominidae</taxon>
        <taxon>Pan</taxon>
    </lineage>
</organism>
<feature type="chain" id="PRO_0000219250" description="Tetraspanin-7">
    <location>
        <begin position="1"/>
        <end position="244"/>
    </location>
</feature>
<feature type="topological domain" description="Cytoplasmic" evidence="1">
    <location>
        <begin position="1"/>
        <end position="11"/>
    </location>
</feature>
<feature type="transmembrane region" description="Helical" evidence="1">
    <location>
        <begin position="12"/>
        <end position="35"/>
    </location>
</feature>
<feature type="topological domain" description="Extracellular" evidence="1">
    <location>
        <begin position="36"/>
        <end position="51"/>
    </location>
</feature>
<feature type="transmembrane region" description="Helical" evidence="1">
    <location>
        <begin position="52"/>
        <end position="70"/>
    </location>
</feature>
<feature type="topological domain" description="Cytoplasmic" evidence="1">
    <location>
        <begin position="71"/>
        <end position="81"/>
    </location>
</feature>
<feature type="transmembrane region" description="Helical" evidence="1">
    <location>
        <begin position="82"/>
        <end position="107"/>
    </location>
</feature>
<feature type="topological domain" description="Extracellular" evidence="1">
    <location>
        <begin position="108"/>
        <end position="208"/>
    </location>
</feature>
<feature type="transmembrane region" description="Helical" evidence="1">
    <location>
        <begin position="209"/>
        <end position="229"/>
    </location>
</feature>
<feature type="topological domain" description="Cytoplasmic" evidence="1">
    <location>
        <begin position="230"/>
        <end position="244"/>
    </location>
</feature>
<feature type="glycosylation site" description="N-linked (GlcNAc...) asparagine" evidence="1">
    <location>
        <position position="49"/>
    </location>
</feature>
<feature type="glycosylation site" description="N-linked (GlcNAc...) asparagine" evidence="1">
    <location>
        <position position="150"/>
    </location>
</feature>
<feature type="glycosylation site" description="N-linked (GlcNAc...) asparagine" evidence="1">
    <location>
        <position position="153"/>
    </location>
</feature>
<feature type="glycosylation site" description="N-linked (GlcNAc...) asparagine" evidence="1">
    <location>
        <position position="172"/>
    </location>
</feature>
<feature type="glycosylation site" description="N-linked (GlcNAc...) asparagine" evidence="1">
    <location>
        <position position="183"/>
    </location>
</feature>